<keyword id="KW-0997">Cell inner membrane</keyword>
<keyword id="KW-1003">Cell membrane</keyword>
<keyword id="KW-0133">Cell shape</keyword>
<keyword id="KW-0961">Cell wall biogenesis/degradation</keyword>
<keyword id="KW-0328">Glycosyltransferase</keyword>
<keyword id="KW-0472">Membrane</keyword>
<keyword id="KW-0573">Peptidoglycan synthesis</keyword>
<keyword id="KW-1185">Reference proteome</keyword>
<keyword id="KW-0808">Transferase</keyword>
<keyword id="KW-0812">Transmembrane</keyword>
<keyword id="KW-1133">Transmembrane helix</keyword>
<name>MTGA_PECAS</name>
<reference key="1">
    <citation type="journal article" date="2004" name="Proc. Natl. Acad. Sci. U.S.A.">
        <title>Genome sequence of the enterobacterial phytopathogen Erwinia carotovora subsp. atroseptica and characterization of virulence factors.</title>
        <authorList>
            <person name="Bell K.S."/>
            <person name="Sebaihia M."/>
            <person name="Pritchard L."/>
            <person name="Holden M.T.G."/>
            <person name="Hyman L.J."/>
            <person name="Holeva M.C."/>
            <person name="Thomson N.R."/>
            <person name="Bentley S.D."/>
            <person name="Churcher L.J.C."/>
            <person name="Mungall K."/>
            <person name="Atkin R."/>
            <person name="Bason N."/>
            <person name="Brooks K."/>
            <person name="Chillingworth T."/>
            <person name="Clark K."/>
            <person name="Doggett J."/>
            <person name="Fraser A."/>
            <person name="Hance Z."/>
            <person name="Hauser H."/>
            <person name="Jagels K."/>
            <person name="Moule S."/>
            <person name="Norbertczak H."/>
            <person name="Ormond D."/>
            <person name="Price C."/>
            <person name="Quail M.A."/>
            <person name="Sanders M."/>
            <person name="Walker D."/>
            <person name="Whitehead S."/>
            <person name="Salmond G.P.C."/>
            <person name="Birch P.R.J."/>
            <person name="Parkhill J."/>
            <person name="Toth I.K."/>
        </authorList>
    </citation>
    <scope>NUCLEOTIDE SEQUENCE [LARGE SCALE GENOMIC DNA]</scope>
    <source>
        <strain>SCRI 1043 / ATCC BAA-672</strain>
    </source>
</reference>
<organism>
    <name type="scientific">Pectobacterium atrosepticum (strain SCRI 1043 / ATCC BAA-672)</name>
    <name type="common">Erwinia carotovora subsp. atroseptica</name>
    <dbReference type="NCBI Taxonomy" id="218491"/>
    <lineage>
        <taxon>Bacteria</taxon>
        <taxon>Pseudomonadati</taxon>
        <taxon>Pseudomonadota</taxon>
        <taxon>Gammaproteobacteria</taxon>
        <taxon>Enterobacterales</taxon>
        <taxon>Pectobacteriaceae</taxon>
        <taxon>Pectobacterium</taxon>
    </lineage>
</organism>
<gene>
    <name evidence="1" type="primary">mtgA</name>
    <name type="ordered locus">ECA0317</name>
</gene>
<dbReference type="EC" id="2.4.99.28" evidence="1"/>
<dbReference type="EMBL" id="BX950851">
    <property type="protein sequence ID" value="CAG73237.1"/>
    <property type="molecule type" value="Genomic_DNA"/>
</dbReference>
<dbReference type="RefSeq" id="WP_011091949.1">
    <property type="nucleotide sequence ID" value="NC_004547.2"/>
</dbReference>
<dbReference type="SMR" id="Q3V7N8"/>
<dbReference type="STRING" id="218491.ECA0317"/>
<dbReference type="CAZy" id="GT51">
    <property type="family name" value="Glycosyltransferase Family 51"/>
</dbReference>
<dbReference type="KEGG" id="eca:ECA0317"/>
<dbReference type="PATRIC" id="fig|218491.5.peg.318"/>
<dbReference type="eggNOG" id="COG0744">
    <property type="taxonomic scope" value="Bacteria"/>
</dbReference>
<dbReference type="HOGENOM" id="CLU_006354_1_1_6"/>
<dbReference type="OrthoDB" id="9766909at2"/>
<dbReference type="UniPathway" id="UPA00219"/>
<dbReference type="Proteomes" id="UP000007966">
    <property type="component" value="Chromosome"/>
</dbReference>
<dbReference type="GO" id="GO:0009274">
    <property type="term" value="C:peptidoglycan-based cell wall"/>
    <property type="evidence" value="ECO:0007669"/>
    <property type="project" value="InterPro"/>
</dbReference>
<dbReference type="GO" id="GO:0005886">
    <property type="term" value="C:plasma membrane"/>
    <property type="evidence" value="ECO:0007669"/>
    <property type="project" value="UniProtKB-SubCell"/>
</dbReference>
<dbReference type="GO" id="GO:0016763">
    <property type="term" value="F:pentosyltransferase activity"/>
    <property type="evidence" value="ECO:0007669"/>
    <property type="project" value="InterPro"/>
</dbReference>
<dbReference type="GO" id="GO:0008955">
    <property type="term" value="F:peptidoglycan glycosyltransferase activity"/>
    <property type="evidence" value="ECO:0007669"/>
    <property type="project" value="UniProtKB-UniRule"/>
</dbReference>
<dbReference type="GO" id="GO:0071555">
    <property type="term" value="P:cell wall organization"/>
    <property type="evidence" value="ECO:0007669"/>
    <property type="project" value="UniProtKB-KW"/>
</dbReference>
<dbReference type="GO" id="GO:0009252">
    <property type="term" value="P:peptidoglycan biosynthetic process"/>
    <property type="evidence" value="ECO:0007669"/>
    <property type="project" value="UniProtKB-UniRule"/>
</dbReference>
<dbReference type="GO" id="GO:0008360">
    <property type="term" value="P:regulation of cell shape"/>
    <property type="evidence" value="ECO:0007669"/>
    <property type="project" value="UniProtKB-KW"/>
</dbReference>
<dbReference type="Gene3D" id="1.10.3810.10">
    <property type="entry name" value="Biosynthetic peptidoglycan transglycosylase-like"/>
    <property type="match status" value="1"/>
</dbReference>
<dbReference type="HAMAP" id="MF_00766">
    <property type="entry name" value="PGT_MtgA"/>
    <property type="match status" value="1"/>
</dbReference>
<dbReference type="InterPro" id="IPR001264">
    <property type="entry name" value="Glyco_trans_51"/>
</dbReference>
<dbReference type="InterPro" id="IPR023346">
    <property type="entry name" value="Lysozyme-like_dom_sf"/>
</dbReference>
<dbReference type="InterPro" id="IPR036950">
    <property type="entry name" value="PBP_transglycosylase"/>
</dbReference>
<dbReference type="InterPro" id="IPR011812">
    <property type="entry name" value="Pep_trsgly"/>
</dbReference>
<dbReference type="NCBIfam" id="TIGR02070">
    <property type="entry name" value="mono_pep_trsgly"/>
    <property type="match status" value="1"/>
</dbReference>
<dbReference type="PANTHER" id="PTHR30400:SF0">
    <property type="entry name" value="BIOSYNTHETIC PEPTIDOGLYCAN TRANSGLYCOSYLASE"/>
    <property type="match status" value="1"/>
</dbReference>
<dbReference type="PANTHER" id="PTHR30400">
    <property type="entry name" value="MONOFUNCTIONAL BIOSYNTHETIC PEPTIDOGLYCAN TRANSGLYCOSYLASE"/>
    <property type="match status" value="1"/>
</dbReference>
<dbReference type="Pfam" id="PF00912">
    <property type="entry name" value="Transgly"/>
    <property type="match status" value="1"/>
</dbReference>
<dbReference type="SUPFAM" id="SSF53955">
    <property type="entry name" value="Lysozyme-like"/>
    <property type="match status" value="1"/>
</dbReference>
<accession>Q3V7N8</accession>
<sequence length="245" mass="27431">MRWSRGRGGGLLTWLKRLIVRSVLVVIGAWLAGILLFSFLPVPFSAVMVDRQVSAWLKGEFAYVAHSDWVAMDDIAPAMALAVMAAEDQKFPQHWGFDVDAIGQALKHNERNTQRVRGASTLSQQMVKNLFLWDGRSWVRKGLEAGITTGVELVWTKRRIITVYLNIAEFGPGVFGVEAAARRYFNKSASKLTASESALLAAVLPNPIRFRANAPSGYVIQRQQWILRQMRQMGGDAFLRDNNLN</sequence>
<comment type="function">
    <text evidence="1">Peptidoglycan polymerase that catalyzes glycan chain elongation from lipid-linked precursors.</text>
</comment>
<comment type="catalytic activity">
    <reaction evidence="1">
        <text>[GlcNAc-(1-&gt;4)-Mur2Ac(oyl-L-Ala-gamma-D-Glu-L-Lys-D-Ala-D-Ala)](n)-di-trans,octa-cis-undecaprenyl diphosphate + beta-D-GlcNAc-(1-&gt;4)-Mur2Ac(oyl-L-Ala-gamma-D-Glu-L-Lys-D-Ala-D-Ala)-di-trans,octa-cis-undecaprenyl diphosphate = [GlcNAc-(1-&gt;4)-Mur2Ac(oyl-L-Ala-gamma-D-Glu-L-Lys-D-Ala-D-Ala)](n+1)-di-trans,octa-cis-undecaprenyl diphosphate + di-trans,octa-cis-undecaprenyl diphosphate + H(+)</text>
        <dbReference type="Rhea" id="RHEA:23708"/>
        <dbReference type="Rhea" id="RHEA-COMP:9602"/>
        <dbReference type="Rhea" id="RHEA-COMP:9603"/>
        <dbReference type="ChEBI" id="CHEBI:15378"/>
        <dbReference type="ChEBI" id="CHEBI:58405"/>
        <dbReference type="ChEBI" id="CHEBI:60033"/>
        <dbReference type="ChEBI" id="CHEBI:78435"/>
        <dbReference type="EC" id="2.4.99.28"/>
    </reaction>
</comment>
<comment type="pathway">
    <text evidence="1">Cell wall biogenesis; peptidoglycan biosynthesis.</text>
</comment>
<comment type="subcellular location">
    <subcellularLocation>
        <location evidence="1">Cell inner membrane</location>
        <topology evidence="1">Single-pass membrane protein</topology>
    </subcellularLocation>
</comment>
<comment type="similarity">
    <text evidence="1">Belongs to the glycosyltransferase 51 family.</text>
</comment>
<feature type="chain" id="PRO_0000257668" description="Biosynthetic peptidoglycan transglycosylase">
    <location>
        <begin position="1"/>
        <end position="245"/>
    </location>
</feature>
<feature type="transmembrane region" description="Helical" evidence="1">
    <location>
        <begin position="24"/>
        <end position="44"/>
    </location>
</feature>
<protein>
    <recommendedName>
        <fullName evidence="1">Biosynthetic peptidoglycan transglycosylase</fullName>
        <ecNumber evidence="1">2.4.99.28</ecNumber>
    </recommendedName>
    <alternativeName>
        <fullName evidence="1">Glycan polymerase</fullName>
    </alternativeName>
    <alternativeName>
        <fullName evidence="1">Peptidoglycan glycosyltransferase MtgA</fullName>
        <shortName evidence="1">PGT</shortName>
    </alternativeName>
</protein>
<evidence type="ECO:0000255" key="1">
    <source>
        <dbReference type="HAMAP-Rule" id="MF_00766"/>
    </source>
</evidence>
<proteinExistence type="inferred from homology"/>